<feature type="chain" id="PRO_0000407690" description="Beta-galactosidase LacZ">
    <location>
        <begin position="1"/>
        <end position="667"/>
    </location>
</feature>
<feature type="active site" description="Proton donor" evidence="1">
    <location>
        <position position="148"/>
    </location>
</feature>
<feature type="active site" description="Nucleophile" evidence="1">
    <location>
        <position position="307"/>
    </location>
</feature>
<feature type="binding site" evidence="1">
    <location>
        <position position="109"/>
    </location>
    <ligand>
        <name>substrate</name>
    </ligand>
</feature>
<feature type="binding site" evidence="1">
    <location>
        <position position="113"/>
    </location>
    <ligand>
        <name>Zn(2+)</name>
        <dbReference type="ChEBI" id="CHEBI:29105"/>
    </ligand>
</feature>
<feature type="binding site" evidence="1">
    <location>
        <position position="147"/>
    </location>
    <ligand>
        <name>substrate</name>
    </ligand>
</feature>
<feature type="binding site" evidence="1">
    <location>
        <position position="153"/>
    </location>
    <ligand>
        <name>Zn(2+)</name>
        <dbReference type="ChEBI" id="CHEBI:29105"/>
    </ligand>
</feature>
<feature type="binding site" evidence="1">
    <location>
        <position position="155"/>
    </location>
    <ligand>
        <name>Zn(2+)</name>
        <dbReference type="ChEBI" id="CHEBI:29105"/>
    </ligand>
</feature>
<feature type="binding site" evidence="1">
    <location>
        <position position="158"/>
    </location>
    <ligand>
        <name>Zn(2+)</name>
        <dbReference type="ChEBI" id="CHEBI:29105"/>
    </ligand>
</feature>
<feature type="binding site" evidence="1">
    <location>
        <position position="315"/>
    </location>
    <ligand>
        <name>substrate</name>
    </ligand>
</feature>
<feature type="binding site" evidence="1">
    <location>
        <begin position="355"/>
        <end position="358"/>
    </location>
    <ligand>
        <name>substrate</name>
    </ligand>
</feature>
<protein>
    <recommendedName>
        <fullName>Beta-galactosidase LacZ</fullName>
        <shortName evidence="2">Beta-gal</shortName>
        <ecNumber>3.2.1.23</ecNumber>
    </recommendedName>
</protein>
<comment type="function">
    <text evidence="4">Catalyzes the hydrolysis of lactose to its constituent monosaccharides glucose and galactose.</text>
</comment>
<comment type="catalytic activity">
    <reaction evidence="4">
        <text>Hydrolysis of terminal non-reducing beta-D-galactose residues in beta-D-galactosides.</text>
        <dbReference type="EC" id="3.2.1.23"/>
    </reaction>
</comment>
<comment type="biophysicochemical properties">
    <kinetics>
        <KM evidence="4">3.84 mM for o-nitrophenyl-beta-D-galactopyranoside (ONPG) (at 37 degrees Celsius and pH 6.0)</KM>
        <KM evidence="4">88.9 mM for lactose (at 37 degrees Celsius and pH 6.0)</KM>
    </kinetics>
    <phDependence>
        <text evidence="4">Optimum pH is 6.0 for both lactose and ONPG hydrolysis, but lactose hydrolysis activity is more sensitive to changes in pH than ONPG hydrolysis activity.</text>
    </phDependence>
    <temperatureDependence>
        <text evidence="4">Optimum temperature is 37 degrees Celsius for both lactose and ONPG hydrolysis. Retains 16.5% of activity for ONPG hydrolysis and 11.2% of activity for lactose hydrolysis at 4 degrees Celsius. Stable at or below 25 degrees Celsius, but loses 50% of its activity after 1 hour at 37 degrees Celsius and is inactivated after only 40 minutes at 45 degrees Celsius. Can hydrolyze 73% of lactose in milk in 30 hours at 10 degrees Celsius.</text>
    </temperatureDependence>
</comment>
<comment type="biotechnology">
    <text evidence="4">Has potential for lactose removal from dairy products at refrigerated temperatures.</text>
</comment>
<comment type="similarity">
    <text evidence="3">Belongs to the glycosyl hydrolase 42 family.</text>
</comment>
<reference evidence="5 7" key="1">
    <citation type="journal article" date="2010" name="Curr. Microbiol.">
        <title>Functional identification of a putative beta-galactosidase gene in the special lac gene cluster of Lactobacillus acidophilus.</title>
        <authorList>
            <person name="Pan Q."/>
            <person name="Zhu J."/>
            <person name="Liu L."/>
            <person name="Cong Y."/>
            <person name="Hu F."/>
            <person name="Li J."/>
            <person name="Yu X."/>
        </authorList>
    </citation>
    <scope>NUCLEOTIDE SEQUENCE [GENOMIC DNA]</scope>
    <scope>FUNCTION</scope>
    <scope>CATALYTIC ACTIVITY</scope>
    <scope>BIOPHYSICOCHEMICAL PROPERTIES</scope>
    <scope>BIOTECHNOLOGY</scope>
    <source>
        <strain>ATCC 4356 / DSM 20079 / NBRC 13951 / JCM 1132 / NCIMB 8690</strain>
    </source>
</reference>
<reference evidence="6" key="2">
    <citation type="journal article" date="2005" name="Proc. Natl. Acad. Sci. U.S.A.">
        <title>Complete genome sequence of the probiotic lactic acid bacterium Lactobacillus acidophilus NCFM.</title>
        <authorList>
            <person name="Altermann E."/>
            <person name="Russell W.M."/>
            <person name="Azcarate-Peril M.A."/>
            <person name="Barrangou R."/>
            <person name="Buck B.L."/>
            <person name="McAuliffe O."/>
            <person name="Souther N."/>
            <person name="Dobson A."/>
            <person name="Duong T."/>
            <person name="Callanan M."/>
            <person name="Lick S."/>
            <person name="Hamrick A."/>
            <person name="Cano R."/>
            <person name="Klaenhammer T.R."/>
        </authorList>
    </citation>
    <scope>NUCLEOTIDE SEQUENCE [LARGE SCALE GENOMIC DNA]</scope>
    <source>
        <strain>ATCC 700396 / NCK56 / N2 / NCFM</strain>
    </source>
</reference>
<sequence length="667" mass="76584">MTQLSRFLYGGDYNPDQWPEETWSKDIHVFKKADINSATINIFSWALLEPREGKYNFSKLDKVVQQLSDANFDIVMGTATAAMPAWMFKKYPDIARVDYQDRRHVFGQRHNFCPNSSNYQRLAGELVKQLVERYKDNKHIVVWHINNEYGGNCYCENCQNAFRKWLKNKYKTVEGLNKAWNMNVWSHTIYDWDEIVVPNELGDVWGIEGSETIVAGLSIDYLRFQSESMQNLFKMEKKIIKKYDPETPVTTNFHGLPNKMVDYQKWAKGQDIISYDSYPTYDAPAYKAAFLYDLMRSLKHQPFMLMESAPSQVNWQPYSPLKRPGQMEATEFQAVAHGADTVQFFQLKQAVGGSEKFHSAVIAHSQRTDTRVFKELADLGKKLKNAGPTILGSKTKAKVAIVFDWSNFWSYEYVDGITQDLNYVDSILDYYRQFYERNIPTDIIGVDDDFSNYDLVVAPVLYMVKHGLDKKINDYVENGGNFVTTYMSGMVNSSDNVYLGGYPGPLKEVTGIWVEESDAVVPGQKIKVLMNGKDYDTGLICNLIHPNDAKILATYASEFYAGTPAVTENQYGKGRAWYIGTRLEHQGLTQLFNHIIFETGVESLVCDSHKLEITKRVTEDGKELYFVLNMSNEERTLPSKFTGYEDILTGEKAHKDMKGWDVQVLRN</sequence>
<evidence type="ECO:0000250" key="1">
    <source>
        <dbReference type="UniProtKB" id="O69315"/>
    </source>
</evidence>
<evidence type="ECO:0000250" key="2">
    <source>
        <dbReference type="UniProtKB" id="P19668"/>
    </source>
</evidence>
<evidence type="ECO:0000255" key="3"/>
<evidence type="ECO:0000269" key="4">
    <source>
    </source>
</evidence>
<evidence type="ECO:0000305" key="5"/>
<evidence type="ECO:0000312" key="6">
    <source>
        <dbReference type="EMBL" id="AAV43283.1"/>
    </source>
</evidence>
<evidence type="ECO:0000312" key="7">
    <source>
        <dbReference type="EMBL" id="ACC38288.1"/>
    </source>
</evidence>
<accession>Q5FJ41</accession>
<accession>B2LWG4</accession>
<organism>
    <name type="scientific">Lactobacillus acidophilus (strain ATCC 700396 / NCK56 / N2 / NCFM)</name>
    <dbReference type="NCBI Taxonomy" id="272621"/>
    <lineage>
        <taxon>Bacteria</taxon>
        <taxon>Bacillati</taxon>
        <taxon>Bacillota</taxon>
        <taxon>Bacilli</taxon>
        <taxon>Lactobacillales</taxon>
        <taxon>Lactobacillaceae</taxon>
        <taxon>Lactobacillus</taxon>
    </lineage>
</organism>
<name>BGAL1_LACAC</name>
<gene>
    <name evidence="6" type="primary">lacZ</name>
    <name type="ordered locus">LBA1462</name>
</gene>
<proteinExistence type="evidence at protein level"/>
<keyword id="KW-0326">Glycosidase</keyword>
<keyword id="KW-0378">Hydrolase</keyword>
<keyword id="KW-0479">Metal-binding</keyword>
<keyword id="KW-1185">Reference proteome</keyword>
<keyword id="KW-0862">Zinc</keyword>
<dbReference type="EC" id="3.2.1.23"/>
<dbReference type="EMBL" id="EU590652">
    <property type="protein sequence ID" value="ACC38288.1"/>
    <property type="molecule type" value="Genomic_DNA"/>
</dbReference>
<dbReference type="EMBL" id="CP000033">
    <property type="protein sequence ID" value="AAV43283.1"/>
    <property type="molecule type" value="Genomic_DNA"/>
</dbReference>
<dbReference type="RefSeq" id="WP_011254470.1">
    <property type="nucleotide sequence ID" value="NC_006814.3"/>
</dbReference>
<dbReference type="RefSeq" id="YP_194314.1">
    <property type="nucleotide sequence ID" value="NC_006814.3"/>
</dbReference>
<dbReference type="SMR" id="Q5FJ41"/>
<dbReference type="STRING" id="272621.LBA1462"/>
<dbReference type="CAZy" id="GH42">
    <property type="family name" value="Glycoside Hydrolase Family 42"/>
</dbReference>
<dbReference type="KEGG" id="lac:LBA1462"/>
<dbReference type="PATRIC" id="fig|272621.13.peg.1384"/>
<dbReference type="eggNOG" id="COG1874">
    <property type="taxonomic scope" value="Bacteria"/>
</dbReference>
<dbReference type="HOGENOM" id="CLU_012430_1_1_9"/>
<dbReference type="OrthoDB" id="9800974at2"/>
<dbReference type="BioCyc" id="LACI272621:G1G49-1432-MONOMER"/>
<dbReference type="Proteomes" id="UP000006381">
    <property type="component" value="Chromosome"/>
</dbReference>
<dbReference type="GO" id="GO:0009341">
    <property type="term" value="C:beta-galactosidase complex"/>
    <property type="evidence" value="ECO:0007669"/>
    <property type="project" value="InterPro"/>
</dbReference>
<dbReference type="GO" id="GO:0004565">
    <property type="term" value="F:beta-galactosidase activity"/>
    <property type="evidence" value="ECO:0007669"/>
    <property type="project" value="UniProtKB-EC"/>
</dbReference>
<dbReference type="GO" id="GO:0046872">
    <property type="term" value="F:metal ion binding"/>
    <property type="evidence" value="ECO:0007669"/>
    <property type="project" value="UniProtKB-KW"/>
</dbReference>
<dbReference type="GO" id="GO:0006012">
    <property type="term" value="P:galactose metabolic process"/>
    <property type="evidence" value="ECO:0007669"/>
    <property type="project" value="InterPro"/>
</dbReference>
<dbReference type="CDD" id="cd03143">
    <property type="entry name" value="A4_beta-galactosidase_middle_domain"/>
    <property type="match status" value="1"/>
</dbReference>
<dbReference type="Gene3D" id="3.40.50.880">
    <property type="match status" value="1"/>
</dbReference>
<dbReference type="Gene3D" id="3.20.20.80">
    <property type="entry name" value="Glycosidases"/>
    <property type="match status" value="1"/>
</dbReference>
<dbReference type="Gene3D" id="2.60.40.1180">
    <property type="entry name" value="Golgi alpha-mannosidase II"/>
    <property type="match status" value="1"/>
</dbReference>
<dbReference type="InterPro" id="IPR013739">
    <property type="entry name" value="Beta_galactosidase_C"/>
</dbReference>
<dbReference type="InterPro" id="IPR013738">
    <property type="entry name" value="Beta_galactosidase_Trimer"/>
</dbReference>
<dbReference type="InterPro" id="IPR029062">
    <property type="entry name" value="Class_I_gatase-like"/>
</dbReference>
<dbReference type="InterPro" id="IPR003476">
    <property type="entry name" value="Glyco_hydro_42"/>
</dbReference>
<dbReference type="InterPro" id="IPR013529">
    <property type="entry name" value="Glyco_hydro_42_N"/>
</dbReference>
<dbReference type="InterPro" id="IPR013780">
    <property type="entry name" value="Glyco_hydro_b"/>
</dbReference>
<dbReference type="InterPro" id="IPR017853">
    <property type="entry name" value="Glycoside_hydrolase_SF"/>
</dbReference>
<dbReference type="PANTHER" id="PTHR36447">
    <property type="entry name" value="BETA-GALACTOSIDASE GANA"/>
    <property type="match status" value="1"/>
</dbReference>
<dbReference type="PANTHER" id="PTHR36447:SF1">
    <property type="entry name" value="BETA-GALACTOSIDASE GANA"/>
    <property type="match status" value="1"/>
</dbReference>
<dbReference type="Pfam" id="PF02449">
    <property type="entry name" value="Glyco_hydro_42"/>
    <property type="match status" value="1"/>
</dbReference>
<dbReference type="Pfam" id="PF08533">
    <property type="entry name" value="Glyco_hydro_42C"/>
    <property type="match status" value="1"/>
</dbReference>
<dbReference type="Pfam" id="PF08532">
    <property type="entry name" value="Glyco_hydro_42M"/>
    <property type="match status" value="1"/>
</dbReference>
<dbReference type="PIRSF" id="PIRSF001084">
    <property type="entry name" value="B-galactosidase"/>
    <property type="match status" value="1"/>
</dbReference>
<dbReference type="SUPFAM" id="SSF51445">
    <property type="entry name" value="(Trans)glycosidases"/>
    <property type="match status" value="1"/>
</dbReference>
<dbReference type="SUPFAM" id="SSF52317">
    <property type="entry name" value="Class I glutamine amidotransferase-like"/>
    <property type="match status" value="1"/>
</dbReference>